<keyword id="KW-0520">NAD</keyword>
<keyword id="KW-0560">Oxidoreductase</keyword>
<keyword id="KW-1185">Reference proteome</keyword>
<keyword id="KW-0816">Tricarboxylic acid cycle</keyword>
<protein>
    <recommendedName>
        <fullName evidence="1">Malate dehydrogenase</fullName>
        <ecNumber evidence="1">1.1.1.37</ecNumber>
    </recommendedName>
</protein>
<comment type="function">
    <text evidence="1">Catalyzes the reversible oxidation of malate to oxaloacetate.</text>
</comment>
<comment type="catalytic activity">
    <reaction evidence="1">
        <text>(S)-malate + NAD(+) = oxaloacetate + NADH + H(+)</text>
        <dbReference type="Rhea" id="RHEA:21432"/>
        <dbReference type="ChEBI" id="CHEBI:15378"/>
        <dbReference type="ChEBI" id="CHEBI:15589"/>
        <dbReference type="ChEBI" id="CHEBI:16452"/>
        <dbReference type="ChEBI" id="CHEBI:57540"/>
        <dbReference type="ChEBI" id="CHEBI:57945"/>
        <dbReference type="EC" id="1.1.1.37"/>
    </reaction>
</comment>
<comment type="similarity">
    <text evidence="3">Belongs to the LDH/MDH superfamily.</text>
</comment>
<accession>P58407</accession>
<name>MDH_SULTO</name>
<reference key="1">
    <citation type="journal article" date="2001" name="DNA Res.">
        <title>Complete genome sequence of an aerobic thermoacidophilic Crenarchaeon, Sulfolobus tokodaii strain7.</title>
        <authorList>
            <person name="Kawarabayasi Y."/>
            <person name="Hino Y."/>
            <person name="Horikawa H."/>
            <person name="Jin-no K."/>
            <person name="Takahashi M."/>
            <person name="Sekine M."/>
            <person name="Baba S."/>
            <person name="Ankai A."/>
            <person name="Kosugi H."/>
            <person name="Hosoyama A."/>
            <person name="Fukui S."/>
            <person name="Nagai Y."/>
            <person name="Nishijima K."/>
            <person name="Otsuka R."/>
            <person name="Nakazawa H."/>
            <person name="Takamiya M."/>
            <person name="Kato Y."/>
            <person name="Yoshizawa T."/>
            <person name="Tanaka T."/>
            <person name="Kudoh Y."/>
            <person name="Yamazaki J."/>
            <person name="Kushida N."/>
            <person name="Oguchi A."/>
            <person name="Aoki K."/>
            <person name="Masuda S."/>
            <person name="Yanagii M."/>
            <person name="Nishimura M."/>
            <person name="Yamagishi A."/>
            <person name="Oshima T."/>
            <person name="Kikuchi H."/>
        </authorList>
    </citation>
    <scope>NUCLEOTIDE SEQUENCE [LARGE SCALE GENOMIC DNA]</scope>
    <source>
        <strain>DSM 16993 / JCM 10545 / NBRC 100140 / 7</strain>
    </source>
</reference>
<feature type="chain" id="PRO_0000113494" description="Malate dehydrogenase">
    <location>
        <begin position="1"/>
        <end position="308"/>
    </location>
</feature>
<feature type="active site" description="Proton acceptor" evidence="2">
    <location>
        <position position="172"/>
    </location>
</feature>
<feature type="binding site" evidence="1">
    <location>
        <begin position="8"/>
        <end position="13"/>
    </location>
    <ligand>
        <name>NAD(+)</name>
        <dbReference type="ChEBI" id="CHEBI:57540"/>
    </ligand>
</feature>
<feature type="binding site" evidence="1">
    <location>
        <position position="33"/>
    </location>
    <ligand>
        <name>NAD(+)</name>
        <dbReference type="ChEBI" id="CHEBI:57540"/>
    </ligand>
</feature>
<feature type="binding site" evidence="2">
    <location>
        <position position="82"/>
    </location>
    <ligand>
        <name>substrate</name>
    </ligand>
</feature>
<feature type="binding site" evidence="2">
    <location>
        <position position="88"/>
    </location>
    <ligand>
        <name>substrate</name>
    </ligand>
</feature>
<feature type="binding site" evidence="1">
    <location>
        <position position="95"/>
    </location>
    <ligand>
        <name>NAD(+)</name>
        <dbReference type="ChEBI" id="CHEBI:57540"/>
    </ligand>
</feature>
<feature type="binding site" evidence="1">
    <location>
        <begin position="118"/>
        <end position="120"/>
    </location>
    <ligand>
        <name>NAD(+)</name>
        <dbReference type="ChEBI" id="CHEBI:57540"/>
    </ligand>
</feature>
<feature type="binding site" evidence="2">
    <location>
        <position position="120"/>
    </location>
    <ligand>
        <name>substrate</name>
    </ligand>
</feature>
<feature type="binding site" evidence="2">
    <location>
        <position position="148"/>
    </location>
    <ligand>
        <name>substrate</name>
    </ligand>
</feature>
<gene>
    <name type="primary">mdh</name>
    <name type="ordered locus">STK_18110</name>
</gene>
<organism>
    <name type="scientific">Sulfurisphaera tokodaii (strain DSM 16993 / JCM 10545 / NBRC 100140 / 7)</name>
    <name type="common">Sulfolobus tokodaii</name>
    <dbReference type="NCBI Taxonomy" id="273063"/>
    <lineage>
        <taxon>Archaea</taxon>
        <taxon>Thermoproteota</taxon>
        <taxon>Thermoprotei</taxon>
        <taxon>Sulfolobales</taxon>
        <taxon>Sulfolobaceae</taxon>
        <taxon>Sulfurisphaera</taxon>
    </lineage>
</organism>
<dbReference type="EC" id="1.1.1.37" evidence="1"/>
<dbReference type="EMBL" id="BA000023">
    <property type="protein sequence ID" value="BAB66902.2"/>
    <property type="molecule type" value="Genomic_DNA"/>
</dbReference>
<dbReference type="RefSeq" id="WP_052846990.1">
    <property type="nucleotide sequence ID" value="NC_003106.2"/>
</dbReference>
<dbReference type="SMR" id="P58407"/>
<dbReference type="STRING" id="273063.STK_18110"/>
<dbReference type="GeneID" id="1459867"/>
<dbReference type="KEGG" id="sto:STK_18110"/>
<dbReference type="PATRIC" id="fig|273063.9.peg.2066"/>
<dbReference type="eggNOG" id="arCOG00246">
    <property type="taxonomic scope" value="Archaea"/>
</dbReference>
<dbReference type="OrthoDB" id="2596at2157"/>
<dbReference type="Proteomes" id="UP000001015">
    <property type="component" value="Chromosome"/>
</dbReference>
<dbReference type="GO" id="GO:0004459">
    <property type="term" value="F:L-lactate dehydrogenase activity"/>
    <property type="evidence" value="ECO:0007669"/>
    <property type="project" value="TreeGrafter"/>
</dbReference>
<dbReference type="GO" id="GO:0030060">
    <property type="term" value="F:L-malate dehydrogenase (NAD+) activity"/>
    <property type="evidence" value="ECO:0007669"/>
    <property type="project" value="UniProtKB-EC"/>
</dbReference>
<dbReference type="GO" id="GO:0006089">
    <property type="term" value="P:lactate metabolic process"/>
    <property type="evidence" value="ECO:0007669"/>
    <property type="project" value="TreeGrafter"/>
</dbReference>
<dbReference type="GO" id="GO:0006099">
    <property type="term" value="P:tricarboxylic acid cycle"/>
    <property type="evidence" value="ECO:0007669"/>
    <property type="project" value="UniProtKB-KW"/>
</dbReference>
<dbReference type="CDD" id="cd00300">
    <property type="entry name" value="LDH_like"/>
    <property type="match status" value="1"/>
</dbReference>
<dbReference type="Gene3D" id="3.90.110.10">
    <property type="entry name" value="Lactate dehydrogenase/glycoside hydrolase, family 4, C-terminal"/>
    <property type="match status" value="1"/>
</dbReference>
<dbReference type="Gene3D" id="3.40.50.720">
    <property type="entry name" value="NAD(P)-binding Rossmann-like Domain"/>
    <property type="match status" value="1"/>
</dbReference>
<dbReference type="InterPro" id="IPR001557">
    <property type="entry name" value="L-lactate/malate_DH"/>
</dbReference>
<dbReference type="InterPro" id="IPR022383">
    <property type="entry name" value="Lactate/malate_DH_C"/>
</dbReference>
<dbReference type="InterPro" id="IPR001236">
    <property type="entry name" value="Lactate/malate_DH_N"/>
</dbReference>
<dbReference type="InterPro" id="IPR015955">
    <property type="entry name" value="Lactate_DH/Glyco_Ohase_4_C"/>
</dbReference>
<dbReference type="InterPro" id="IPR036291">
    <property type="entry name" value="NAD(P)-bd_dom_sf"/>
</dbReference>
<dbReference type="PANTHER" id="PTHR43128">
    <property type="entry name" value="L-2-HYDROXYCARBOXYLATE DEHYDROGENASE (NAD(P)(+))"/>
    <property type="match status" value="1"/>
</dbReference>
<dbReference type="PANTHER" id="PTHR43128:SF16">
    <property type="entry name" value="L-LACTATE DEHYDROGENASE"/>
    <property type="match status" value="1"/>
</dbReference>
<dbReference type="Pfam" id="PF02866">
    <property type="entry name" value="Ldh_1_C"/>
    <property type="match status" value="1"/>
</dbReference>
<dbReference type="Pfam" id="PF00056">
    <property type="entry name" value="Ldh_1_N"/>
    <property type="match status" value="1"/>
</dbReference>
<dbReference type="PIRSF" id="PIRSF000102">
    <property type="entry name" value="Lac_mal_DH"/>
    <property type="match status" value="1"/>
</dbReference>
<dbReference type="PRINTS" id="PR00086">
    <property type="entry name" value="LLDHDRGNASE"/>
</dbReference>
<dbReference type="SUPFAM" id="SSF56327">
    <property type="entry name" value="LDH C-terminal domain-like"/>
    <property type="match status" value="1"/>
</dbReference>
<dbReference type="SUPFAM" id="SSF51735">
    <property type="entry name" value="NAD(P)-binding Rossmann-fold domains"/>
    <property type="match status" value="1"/>
</dbReference>
<proteinExistence type="inferred from homology"/>
<evidence type="ECO:0000250" key="1">
    <source>
        <dbReference type="UniProtKB" id="O08349"/>
    </source>
</evidence>
<evidence type="ECO:0000250" key="2">
    <source>
        <dbReference type="UniProtKB" id="P61889"/>
    </source>
</evidence>
<evidence type="ECO:0000305" key="3"/>
<sequence length="308" mass="34244">MTKIAFIGVGKIGQTIAFNTIMDGYADEVMIYDIIPELPEKFEHELRHALASKRLKVELLSTNNLDDVAGADIVVITAGKPRKPGMSRRDLFVDNAKIMMDLANKLPKKNHGAVYIMVSNPVDMMASVFARYSREFVISTGDQVETMRLRAYIAKKLKIPVYRVNGFVGGEHGEDAVVLWSTVTVNGKPFSEDLGVTKAEVEDYVKKIPGEIIRVMGGTTWGPGTIIAELIRAVALNENKVMSIATPRQFEDEIIHVSVPTVVGSSIGPSLENLLDEKDRWNLMASMKDFYNVYKENLKHLETSIQAQ</sequence>